<protein>
    <recommendedName>
        <fullName>Beta-1,3-galactosyl-O-glycosyl-glycoprotein beta-1,6-N-acetylglucosaminyltransferase</fullName>
        <ecNumber evidence="6">2.4.1.102</ecNumber>
    </recommendedName>
    <alternativeName>
        <fullName evidence="2">Core 2 beta-1,6-N-acetylglucosaminyltransferase</fullName>
        <shortName evidence="2">C2GlcNAcT</shortName>
    </alternativeName>
    <alternativeName>
        <fullName>Core 2-branching enzyme</fullName>
    </alternativeName>
    <alternativeName>
        <fullName>Core2-GlcNAc-transferase</fullName>
        <shortName>C2GNT</shortName>
        <shortName>Core 2 GNT</shortName>
    </alternativeName>
    <alternativeName>
        <fullName evidence="2">Leukocyte type core 2 beta-1,6-N-acetylglucosaminyltransferase</fullName>
        <shortName evidence="2">C2GnT-L</shortName>
    </alternativeName>
</protein>
<evidence type="ECO:0000250" key="1">
    <source>
        <dbReference type="UniProtKB" id="Q02742"/>
    </source>
</evidence>
<evidence type="ECO:0000250" key="2">
    <source>
        <dbReference type="UniProtKB" id="Q09324"/>
    </source>
</evidence>
<evidence type="ECO:0000255" key="3"/>
<evidence type="ECO:0000269" key="4">
    <source>
    </source>
</evidence>
<evidence type="ECO:0000305" key="5"/>
<evidence type="ECO:0000305" key="6">
    <source>
    </source>
</evidence>
<accession>Q92180</accession>
<organism>
    <name type="scientific">Bos taurus</name>
    <name type="common">Bovine</name>
    <dbReference type="NCBI Taxonomy" id="9913"/>
    <lineage>
        <taxon>Eukaryota</taxon>
        <taxon>Metazoa</taxon>
        <taxon>Chordata</taxon>
        <taxon>Craniata</taxon>
        <taxon>Vertebrata</taxon>
        <taxon>Euteleostomi</taxon>
        <taxon>Mammalia</taxon>
        <taxon>Eutheria</taxon>
        <taxon>Laurasiatheria</taxon>
        <taxon>Artiodactyla</taxon>
        <taxon>Ruminantia</taxon>
        <taxon>Pecora</taxon>
        <taxon>Bovidae</taxon>
        <taxon>Bovinae</taxon>
        <taxon>Bos</taxon>
    </lineage>
</organism>
<gene>
    <name type="primary">GCNT1</name>
</gene>
<name>GCNT1_BOVIN</name>
<proteinExistence type="evidence at protein level"/>
<dbReference type="EC" id="2.4.1.102" evidence="6"/>
<dbReference type="EMBL" id="U41320">
    <property type="protein sequence ID" value="AAA83244.1"/>
    <property type="molecule type" value="mRNA"/>
</dbReference>
<dbReference type="SMR" id="Q92180"/>
<dbReference type="FunCoup" id="Q92180">
    <property type="interactions" value="38"/>
</dbReference>
<dbReference type="STRING" id="9913.ENSBTAP00000044098"/>
<dbReference type="CAZy" id="GT14">
    <property type="family name" value="Glycosyltransferase Family 14"/>
</dbReference>
<dbReference type="GlyCosmos" id="Q92180">
    <property type="glycosylation" value="2 sites, No reported glycans"/>
</dbReference>
<dbReference type="GlyGen" id="Q92180">
    <property type="glycosylation" value="2 sites"/>
</dbReference>
<dbReference type="PaxDb" id="9913-ENSBTAP00000044098"/>
<dbReference type="eggNOG" id="KOG0799">
    <property type="taxonomic scope" value="Eukaryota"/>
</dbReference>
<dbReference type="InParanoid" id="Q92180"/>
<dbReference type="UniPathway" id="UPA00378"/>
<dbReference type="Proteomes" id="UP000009136">
    <property type="component" value="Unplaced"/>
</dbReference>
<dbReference type="GO" id="GO:0031985">
    <property type="term" value="C:Golgi cisterna"/>
    <property type="evidence" value="ECO:0000250"/>
    <property type="project" value="UniProtKB"/>
</dbReference>
<dbReference type="GO" id="GO:0000139">
    <property type="term" value="C:Golgi membrane"/>
    <property type="evidence" value="ECO:0007669"/>
    <property type="project" value="UniProtKB-SubCell"/>
</dbReference>
<dbReference type="GO" id="GO:0003829">
    <property type="term" value="F:beta-1,3-galactosyl-O-glycosyl-glycoprotein beta-1,6-N-acetylglucosaminyltransferase activity"/>
    <property type="evidence" value="ECO:0000318"/>
    <property type="project" value="GO_Central"/>
</dbReference>
<dbReference type="GO" id="GO:0060352">
    <property type="term" value="P:cell adhesion molecule production"/>
    <property type="evidence" value="ECO:0000250"/>
    <property type="project" value="UniProtKB"/>
</dbReference>
<dbReference type="GO" id="GO:0016268">
    <property type="term" value="P:core 2 O-glycan biosynthetic process"/>
    <property type="evidence" value="ECO:0000250"/>
    <property type="project" value="UniProtKB"/>
</dbReference>
<dbReference type="GO" id="GO:0009101">
    <property type="term" value="P:glycoprotein biosynthetic process"/>
    <property type="evidence" value="ECO:0000250"/>
    <property type="project" value="UniProtKB"/>
</dbReference>
<dbReference type="GO" id="GO:0050901">
    <property type="term" value="P:leukocyte tethering or rolling"/>
    <property type="evidence" value="ECO:0000250"/>
    <property type="project" value="UniProtKB"/>
</dbReference>
<dbReference type="InterPro" id="IPR003406">
    <property type="entry name" value="Glyco_trans_14"/>
</dbReference>
<dbReference type="PANTHER" id="PTHR19297:SF96">
    <property type="entry name" value="BETA-1,3-GALACTOSYL-O-GLYCOSYL-GLYCOPROTEIN BETA-1,6-N-ACETYLGLUCOSAMINYLTRANSFERASE"/>
    <property type="match status" value="1"/>
</dbReference>
<dbReference type="PANTHER" id="PTHR19297">
    <property type="entry name" value="GLYCOSYLTRANSFERASE 14 FAMILY MEMBER"/>
    <property type="match status" value="1"/>
</dbReference>
<dbReference type="Pfam" id="PF02485">
    <property type="entry name" value="Branch"/>
    <property type="match status" value="1"/>
</dbReference>
<sequence length="427" mass="49734">MLRKLWRRKLFSFPTKYYFLFLAFSVVTFTVLRIHQKTEFVNFGHLELFEENPSSNINCTKILQGDVDEIQKVKLESLTVKFKKRARWTNYDYINMTGDCASFIKKRKYITEPLSKEEAGFPIAYSIVVHHKIEMLDRLLRAIYMPQNFYCIHVDAKSEKSFLAAAVGIASCFSNVFVASQLESVVYASWSRVQADLNCMQDLYQMNAGWKYLINLCGMDFPIKTNLEIVRKLKLLMGENNLETEKMPSHKKERWKKHYEVVNGKLTNMGTDKIHPPLETPLFSGSAHFVVSREYVEYVLQNQNIQKFMEWAKDTYSPDEYLWATIQRIPEVPGSLSLSYKYDTSDMQAIARFVKWQYFEGDVSKGAPYPPCSVHVRSVCVFGAGDLNWLLHVHHLFANKFDTDIDLFAIQCLDEHLRHKALETLKP</sequence>
<reference key="1">
    <citation type="journal article" date="1998" name="Am. J. Respir. Cell Mol. Biol.">
        <title>Mucin biosynthesis: molecular cloning and expression of bovine lung mucin core 2 N-acetylglucosaminyltransferase cDNA.</title>
        <authorList>
            <person name="Li C.-M."/>
            <person name="Adler K.B."/>
            <person name="Cheng P.W."/>
        </authorList>
    </citation>
    <scope>NUCLEOTIDE SEQUENCE [MRNA]</scope>
    <scope>FUNCTION</scope>
    <scope>CATALYTIC ACTIVITY</scope>
    <scope>TISSUE SPECIFICITY</scope>
    <source>
        <tissue>Lung</tissue>
    </source>
</reference>
<comment type="function">
    <text evidence="2 4">Glycosyltransferase that catalyzes the transfer of an N-acetylglucosamine (GlcNAc) moiety in beta1-6 linkage from UDP-GlcNAc onto mucin-type core 1 O-glycan to form the branched mucin-type core 2 O-glycan. The catalysis is metal ion-independent and occurs with inversion of the anomeric configuration of sugar donor (By similarity) (PubMed:9490652). Selectively involved in synthesis of mucin-type core 2 O-glycans that serve as scaffolds for the display of selectin ligand sialyl Lewis X epitope by myeloid cells, with an impact on homeostasis and recruitment to inflammatory sites (By similarity). Can also act on glycolipid substrates. Transfers GlcNAc moiety to GalGb4Cer globosides in a reaction step to the synthesis of stage-specific embryonic antigen 1 (SSEA-1) determinant (By similarity). Can use Galbeta1-3GalNAcalpha1- and Galbeta1-3GalNAcbeta1- oligosaccharide derivatives as acceptor substrates (By similarity).</text>
</comment>
<comment type="catalytic activity">
    <reaction evidence="6">
        <text>a 3-O-[beta-D-galactosyl-(1-&gt;3)-N-acetyl-alpha-D-galactosaminyl]-L-seryl-[protein] + UDP-N-acetyl-alpha-D-glucosamine = 3-O-{beta-D-galactosyl-(1-&gt;3)-[N-acetyl-beta-D-glucosaminyl-(1-&gt;6)]-N-acetyl-alpha-D-galactosaminyl}-L-seryl-[protein] + UDP + H(+)</text>
        <dbReference type="Rhea" id="RHEA:56212"/>
        <dbReference type="Rhea" id="RHEA-COMP:13922"/>
        <dbReference type="Rhea" id="RHEA-COMP:14419"/>
        <dbReference type="ChEBI" id="CHEBI:15378"/>
        <dbReference type="ChEBI" id="CHEBI:57705"/>
        <dbReference type="ChEBI" id="CHEBI:58223"/>
        <dbReference type="ChEBI" id="CHEBI:137949"/>
        <dbReference type="ChEBI" id="CHEBI:139605"/>
        <dbReference type="EC" id="2.4.1.102"/>
    </reaction>
    <physiologicalReaction direction="left-to-right" evidence="6">
        <dbReference type="Rhea" id="RHEA:56213"/>
    </physiologicalReaction>
</comment>
<comment type="catalytic activity">
    <reaction evidence="6">
        <text>a 3-O-[beta-D-galactosyl-(1-&gt;3)-N-acetyl-alpha-D-galactosaminyl]-L-threonyl-[protein] + UDP-N-acetyl-alpha-D-glucosamine = a 3-O-{beta-D-galactosyl-(1-&gt;3)-[N-acetyl-beta-D-glucosaminyl-(1-&gt;6)]-N-acetyl-alpha-D-galactosaminyl}-L-threonyl-[protein] + UDP + H(+)</text>
        <dbReference type="Rhea" id="RHEA:56216"/>
        <dbReference type="Rhea" id="RHEA-COMP:13923"/>
        <dbReference type="Rhea" id="RHEA-COMP:14420"/>
        <dbReference type="ChEBI" id="CHEBI:15378"/>
        <dbReference type="ChEBI" id="CHEBI:57705"/>
        <dbReference type="ChEBI" id="CHEBI:58223"/>
        <dbReference type="ChEBI" id="CHEBI:137950"/>
        <dbReference type="ChEBI" id="CHEBI:139607"/>
        <dbReference type="EC" id="2.4.1.102"/>
    </reaction>
    <physiologicalReaction direction="left-to-right" evidence="6">
        <dbReference type="Rhea" id="RHEA:56217"/>
    </physiologicalReaction>
</comment>
<comment type="catalytic activity">
    <reaction evidence="2">
        <text>a globoside GalGb4Cer + UDP-N-acetyl-alpha-D-glucosamine = a globoside GlcNAc-(beta1-&gt;6)-GalGb4Cer + UDP + H(+)</text>
        <dbReference type="Rhea" id="RHEA:56900"/>
        <dbReference type="ChEBI" id="CHEBI:15378"/>
        <dbReference type="ChEBI" id="CHEBI:57705"/>
        <dbReference type="ChEBI" id="CHEBI:58223"/>
        <dbReference type="ChEBI" id="CHEBI:140691"/>
        <dbReference type="ChEBI" id="CHEBI:140702"/>
    </reaction>
    <physiologicalReaction direction="left-to-right" evidence="2">
        <dbReference type="Rhea" id="RHEA:56901"/>
    </physiologicalReaction>
</comment>
<comment type="catalytic activity">
    <reaction evidence="2">
        <text>a ganglioside GA1 + UDP-N-acetyl-alpha-D-glucosamine = a ganglioside beta-D-GlcNAc-(1-&gt;6)-GA1 + UDP + H(+)</text>
        <dbReference type="Rhea" id="RHEA:69691"/>
        <dbReference type="ChEBI" id="CHEBI:15378"/>
        <dbReference type="ChEBI" id="CHEBI:57705"/>
        <dbReference type="ChEBI" id="CHEBI:58223"/>
        <dbReference type="ChEBI" id="CHEBI:88069"/>
        <dbReference type="ChEBI" id="CHEBI:187897"/>
    </reaction>
    <physiologicalReaction direction="left-to-right" evidence="2">
        <dbReference type="Rhea" id="RHEA:69692"/>
    </physiologicalReaction>
</comment>
<comment type="pathway">
    <text evidence="1">Protein modification; protein glycosylation.</text>
</comment>
<comment type="pathway">
    <text evidence="2">Glycolipid biosynthesis.</text>
</comment>
<comment type="subunit">
    <text evidence="1">Interacts with GOLPH3; may control GCNT1 retention in the Golgi.</text>
</comment>
<comment type="subcellular location">
    <subcellularLocation>
        <location evidence="1">Golgi apparatus membrane</location>
        <topology evidence="1">Single-pass type II membrane protein</topology>
    </subcellularLocation>
    <text evidence="1">Also detected in the trans-Golgi network.</text>
</comment>
<comment type="tissue specificity">
    <text evidence="4">Expressed in tracheal submucosal glands and epithelium (at protein level).</text>
</comment>
<comment type="similarity">
    <text evidence="5">Belongs to the glycosyltransferase 14 family.</text>
</comment>
<feature type="chain" id="PRO_0000191394" description="Beta-1,3-galactosyl-O-glycosyl-glycoprotein beta-1,6-N-acetylglucosaminyltransferase">
    <location>
        <begin position="1"/>
        <end position="427"/>
    </location>
</feature>
<feature type="topological domain" description="Cytoplasmic" evidence="3">
    <location>
        <begin position="1"/>
        <end position="9"/>
    </location>
</feature>
<feature type="transmembrane region" description="Helical; Signal-anchor for type II membrane protein" evidence="3">
    <location>
        <begin position="10"/>
        <end position="32"/>
    </location>
</feature>
<feature type="topological domain" description="Lumenal" evidence="3">
    <location>
        <begin position="33"/>
        <end position="427"/>
    </location>
</feature>
<feature type="region of interest" description="Mediates interaction with GOLPH3 and is necessary and sufficient for localization to the Golgi" evidence="1">
    <location>
        <begin position="5"/>
        <end position="9"/>
    </location>
</feature>
<feature type="region of interest" description="Stem region" evidence="2">
    <location>
        <begin position="33"/>
        <end position="121"/>
    </location>
</feature>
<feature type="region of interest" description="Catalytic" evidence="2">
    <location>
        <begin position="122"/>
        <end position="427"/>
    </location>
</feature>
<feature type="active site" description="Nucleophile" evidence="2">
    <location>
        <position position="320"/>
    </location>
</feature>
<feature type="binding site" evidence="2">
    <location>
        <begin position="128"/>
        <end position="130"/>
    </location>
    <ligand>
        <name>UDP-N-acetyl-alpha-D-glucosamine</name>
        <dbReference type="ChEBI" id="CHEBI:57705"/>
    </ligand>
</feature>
<feature type="binding site" evidence="2">
    <location>
        <begin position="155"/>
        <end position="157"/>
    </location>
    <ligand>
        <name>UDP-N-acetyl-alpha-D-glucosamine</name>
        <dbReference type="ChEBI" id="CHEBI:57705"/>
    </ligand>
</feature>
<feature type="binding site" evidence="2">
    <location>
        <position position="187"/>
    </location>
    <ligand>
        <name>UDP-N-acetyl-alpha-D-glucosamine</name>
        <dbReference type="ChEBI" id="CHEBI:57705"/>
    </ligand>
</feature>
<feature type="binding site" evidence="2">
    <location>
        <position position="243"/>
    </location>
    <ligand>
        <name>a glycoprotein</name>
        <dbReference type="ChEBI" id="CHEBI:17089"/>
    </ligand>
    <ligandPart>
        <name>beta-D-galactosyl-(1-&gt;3)-N-acetyl-alpha-D-galactosaminyl group</name>
        <dbReference type="ChEBI" id="CHEBI:16117"/>
    </ligandPart>
</feature>
<feature type="binding site" evidence="2">
    <location>
        <position position="251"/>
    </location>
    <ligand>
        <name>a glycoprotein</name>
        <dbReference type="ChEBI" id="CHEBI:17089"/>
    </ligand>
    <ligandPart>
        <name>beta-D-galactosyl-(1-&gt;3)-N-acetyl-alpha-D-galactosaminyl group</name>
        <dbReference type="ChEBI" id="CHEBI:16117"/>
    </ligandPart>
</feature>
<feature type="binding site" evidence="2">
    <location>
        <position position="254"/>
    </location>
    <ligand>
        <name>a glycoprotein</name>
        <dbReference type="ChEBI" id="CHEBI:17089"/>
    </ligand>
    <ligandPart>
        <name>beta-D-galactosyl-(1-&gt;3)-N-acetyl-alpha-D-galactosaminyl group</name>
        <dbReference type="ChEBI" id="CHEBI:16117"/>
    </ligandPart>
</feature>
<feature type="binding site" evidence="2">
    <location>
        <position position="320"/>
    </location>
    <ligand>
        <name>a glycoprotein</name>
        <dbReference type="ChEBI" id="CHEBI:17089"/>
    </ligand>
    <ligandPart>
        <name>beta-D-galactosyl-(1-&gt;3)-N-acetyl-alpha-D-galactosaminyl group</name>
        <dbReference type="ChEBI" id="CHEBI:16117"/>
    </ligandPart>
</feature>
<feature type="binding site" evidence="2">
    <location>
        <position position="341"/>
    </location>
    <ligand>
        <name>a glycoprotein</name>
        <dbReference type="ChEBI" id="CHEBI:17089"/>
    </ligand>
    <ligandPart>
        <name>beta-D-galactosyl-(1-&gt;3)-N-acetyl-alpha-D-galactosaminyl group</name>
        <dbReference type="ChEBI" id="CHEBI:16117"/>
    </ligandPart>
</feature>
<feature type="binding site" evidence="2">
    <location>
        <position position="358"/>
    </location>
    <ligand>
        <name>a glycoprotein</name>
        <dbReference type="ChEBI" id="CHEBI:17089"/>
    </ligand>
    <ligandPart>
        <name>beta-D-galactosyl-(1-&gt;3)-N-acetyl-alpha-D-galactosaminyl group</name>
        <dbReference type="ChEBI" id="CHEBI:16117"/>
    </ligandPart>
</feature>
<feature type="binding site" evidence="2">
    <location>
        <position position="377"/>
    </location>
    <ligand>
        <name>UDP-N-acetyl-alpha-D-glucosamine</name>
        <dbReference type="ChEBI" id="CHEBI:57705"/>
    </ligand>
</feature>
<feature type="binding site" evidence="2">
    <location>
        <position position="400"/>
    </location>
    <ligand>
        <name>UDP-N-acetyl-alpha-D-glucosamine</name>
        <dbReference type="ChEBI" id="CHEBI:57705"/>
    </ligand>
</feature>
<feature type="glycosylation site" description="N-linked (GlcNAc...) asparagine" evidence="3">
    <location>
        <position position="58"/>
    </location>
</feature>
<feature type="glycosylation site" description="N-linked (GlcNAc...) asparagine" evidence="3">
    <location>
        <position position="95"/>
    </location>
</feature>
<feature type="disulfide bond" evidence="2">
    <location>
        <begin position="59"/>
        <end position="412"/>
    </location>
</feature>
<feature type="disulfide bond" evidence="2">
    <location>
        <begin position="100"/>
        <end position="172"/>
    </location>
</feature>
<feature type="disulfide bond" evidence="2">
    <location>
        <begin position="151"/>
        <end position="199"/>
    </location>
</feature>
<feature type="disulfide bond" evidence="2">
    <location>
        <begin position="372"/>
        <end position="380"/>
    </location>
</feature>
<keyword id="KW-1015">Disulfide bond</keyword>
<keyword id="KW-0325">Glycoprotein</keyword>
<keyword id="KW-0328">Glycosyltransferase</keyword>
<keyword id="KW-0333">Golgi apparatus</keyword>
<keyword id="KW-0472">Membrane</keyword>
<keyword id="KW-1185">Reference proteome</keyword>
<keyword id="KW-0735">Signal-anchor</keyword>
<keyword id="KW-0808">Transferase</keyword>
<keyword id="KW-0812">Transmembrane</keyword>
<keyword id="KW-1133">Transmembrane helix</keyword>